<comment type="function">
    <text evidence="1 2">Acts as a component of the essential kinetochore-associated Ndc80 complex, which is required for chromosome segregation and spindle checkpoint activity during meiosis and mitosis. Required for kinetochore integrity and the organization of stable microtubule binding sites in the outer plate of the kinetochore. Participates in SAC signaling that responds specifically to disruptions in spindle microtubule dynamics. The NDC80 complex synergistically enhances the affinity of the SKA1 complex for microtubules and may allow the NDC80 complex to track depolymerizing microtubules.</text>
</comment>
<comment type="subunit">
    <text evidence="2">Component of the Ndc80 complex, which is composed of Ndc80, Nuf2 and Spc25.</text>
</comment>
<comment type="subcellular location">
    <subcellularLocation>
        <location evidence="2">Nucleus</location>
    </subcellularLocation>
    <subcellularLocation>
        <location evidence="2">Chromosome</location>
        <location evidence="2">Centromere</location>
        <location evidence="2">Kinetochore</location>
    </subcellularLocation>
</comment>
<comment type="similarity">
    <text evidence="3">Belongs to the SPC25 family.</text>
</comment>
<proteinExistence type="inferred from homology"/>
<feature type="chain" id="PRO_0000392426" description="Kinetochore protein Spc25">
    <location>
        <begin position="1"/>
        <end position="222"/>
    </location>
</feature>
<feature type="coiled-coil region" evidence="3">
    <location>
        <begin position="51"/>
        <end position="86"/>
    </location>
</feature>
<feature type="sequence conflict" description="In Ref. 1; AAU15000." evidence="4" ref="1">
    <original>E</original>
    <variation>G</variation>
    <location>
        <position position="124"/>
    </location>
</feature>
<feature type="sequence conflict" description="In Ref. 1; AAU15000." evidence="4" ref="1">
    <original>D</original>
    <variation>E</variation>
    <location>
        <position position="130"/>
    </location>
</feature>
<feature type="sequence conflict" description="In Ref. 1; AAU15000." evidence="4" ref="1">
    <original>S</original>
    <variation>A</variation>
    <location>
        <position position="157"/>
    </location>
</feature>
<feature type="sequence conflict" description="In Ref. 1; AAU15000." evidence="4" ref="1">
    <original>S</original>
    <variation>G</variation>
    <location>
        <position position="172"/>
    </location>
</feature>
<feature type="sequence conflict" description="In Ref. 1; AAU15000." evidence="4" ref="1">
    <original>I</original>
    <variation>M</variation>
    <location>
        <position position="177"/>
    </location>
</feature>
<gene>
    <name evidence="2" type="primary">Spc25</name>
    <name evidence="5" type="synonym">mitch</name>
    <name type="ORF">GD18864</name>
</gene>
<name>SPC25_DROSI</name>
<reference evidence="5" key="1">
    <citation type="journal article" date="2007" name="J. Cell Sci.">
        <title>Mitch a rapidly evolving component of the Ndc80 kinetochore complex required for correct chromosome segregation in Drosophila.</title>
        <authorList>
            <person name="Williams B."/>
            <person name="Leung G."/>
            <person name="Maiato H."/>
            <person name="Wong A."/>
            <person name="Li Z."/>
            <person name="Williams E.V."/>
            <person name="Kirkpatrick C."/>
            <person name="Aquadro C.F."/>
            <person name="Rieder C.L."/>
            <person name="Goldberg M.L."/>
        </authorList>
    </citation>
    <scope>NUCLEOTIDE SEQUENCE [GENOMIC DNA]</scope>
</reference>
<reference evidence="6" key="2">
    <citation type="journal article" date="2007" name="Nature">
        <title>Evolution of genes and genomes on the Drosophila phylogeny.</title>
        <authorList>
            <consortium name="Drosophila 12 genomes consortium"/>
        </authorList>
    </citation>
    <scope>NUCLEOTIDE SEQUENCE [LARGE SCALE GENOMIC DNA]</scope>
</reference>
<accession>B4R1Z3</accession>
<accession>Q64EW7</accession>
<evidence type="ECO:0000250" key="1">
    <source>
        <dbReference type="UniProtKB" id="Q9HBM1"/>
    </source>
</evidence>
<evidence type="ECO:0000250" key="2">
    <source>
        <dbReference type="UniProtKB" id="Q9V3V7"/>
    </source>
</evidence>
<evidence type="ECO:0000255" key="3"/>
<evidence type="ECO:0000305" key="4"/>
<evidence type="ECO:0000312" key="5">
    <source>
        <dbReference type="EMBL" id="AAU15000.1"/>
    </source>
</evidence>
<evidence type="ECO:0000312" key="6">
    <source>
        <dbReference type="EMBL" id="EDX13145.1"/>
    </source>
</evidence>
<protein>
    <recommendedName>
        <fullName evidence="2">Kinetochore protein Spc25</fullName>
    </recommendedName>
</protein>
<keyword id="KW-0131">Cell cycle</keyword>
<keyword id="KW-0132">Cell division</keyword>
<keyword id="KW-0137">Centromere</keyword>
<keyword id="KW-0158">Chromosome</keyword>
<keyword id="KW-0175">Coiled coil</keyword>
<keyword id="KW-0995">Kinetochore</keyword>
<keyword id="KW-0469">Meiosis</keyword>
<keyword id="KW-0498">Mitosis</keyword>
<keyword id="KW-0539">Nucleus</keyword>
<keyword id="KW-1185">Reference proteome</keyword>
<organism>
    <name type="scientific">Drosophila simulans</name>
    <name type="common">Fruit fly</name>
    <dbReference type="NCBI Taxonomy" id="7240"/>
    <lineage>
        <taxon>Eukaryota</taxon>
        <taxon>Metazoa</taxon>
        <taxon>Ecdysozoa</taxon>
        <taxon>Arthropoda</taxon>
        <taxon>Hexapoda</taxon>
        <taxon>Insecta</taxon>
        <taxon>Pterygota</taxon>
        <taxon>Neoptera</taxon>
        <taxon>Endopterygota</taxon>
        <taxon>Diptera</taxon>
        <taxon>Brachycera</taxon>
        <taxon>Muscomorpha</taxon>
        <taxon>Ephydroidea</taxon>
        <taxon>Drosophilidae</taxon>
        <taxon>Drosophila</taxon>
        <taxon>Sophophora</taxon>
    </lineage>
</organism>
<sequence length="222" mass="25643">MAIIMAESSYERRVKALYEKQIRMEALEAKFIKKVYKFNSNLLDVKEAACRHQRKVGKLQKVLMERREELDKRVSFIEELDRELEATKLRDLAMKDRIKQQKMLARQRKNEIMESIHTLSKTTETYINQDALPARVKGVTVLRGDKRNQLIPFDLKSTDVEGLDSLCQHLESLNVDIAQWQQLISLAMDVAMESRAPTTPPKEAANCNSIIEIDLTSPTCHI</sequence>
<dbReference type="EMBL" id="AY714306">
    <property type="protein sequence ID" value="AAU15000.1"/>
    <property type="molecule type" value="Genomic_DNA"/>
</dbReference>
<dbReference type="EMBL" id="CM000364">
    <property type="protein sequence ID" value="EDX13145.1"/>
    <property type="molecule type" value="Genomic_DNA"/>
</dbReference>
<dbReference type="SMR" id="B4R1Z3"/>
<dbReference type="STRING" id="7240.B4R1Z3"/>
<dbReference type="EnsemblMetazoa" id="FBtr0218774">
    <property type="protein sequence ID" value="FBpp0217266"/>
    <property type="gene ID" value="FBgn0082402"/>
</dbReference>
<dbReference type="EnsemblMetazoa" id="XM_002103606.4">
    <property type="protein sequence ID" value="XP_002103642.1"/>
    <property type="gene ID" value="LOC6728293"/>
</dbReference>
<dbReference type="GeneID" id="6728293"/>
<dbReference type="KEGG" id="dsi:Dsimw501_GD18864"/>
<dbReference type="HOGENOM" id="CLU_1246541_0_0_1"/>
<dbReference type="OMA" id="NELMECM"/>
<dbReference type="OrthoDB" id="8006210at2759"/>
<dbReference type="PhylomeDB" id="B4R1Z3"/>
<dbReference type="Proteomes" id="UP000000304">
    <property type="component" value="Chromosome 3R"/>
</dbReference>
<dbReference type="Bgee" id="FBgn0082402">
    <property type="expression patterns" value="Expressed in embryo and 3 other cell types or tissues"/>
</dbReference>
<dbReference type="GO" id="GO:0031262">
    <property type="term" value="C:Ndc80 complex"/>
    <property type="evidence" value="ECO:0000250"/>
    <property type="project" value="UniProtKB"/>
</dbReference>
<dbReference type="GO" id="GO:0005634">
    <property type="term" value="C:nucleus"/>
    <property type="evidence" value="ECO:0007669"/>
    <property type="project" value="UniProtKB-SubCell"/>
</dbReference>
<dbReference type="GO" id="GO:0051301">
    <property type="term" value="P:cell division"/>
    <property type="evidence" value="ECO:0007669"/>
    <property type="project" value="UniProtKB-KW"/>
</dbReference>
<dbReference type="GO" id="GO:0051311">
    <property type="term" value="P:meiotic metaphase chromosome alignment"/>
    <property type="evidence" value="ECO:0000250"/>
    <property type="project" value="UniProtKB"/>
</dbReference>
<dbReference type="GO" id="GO:0000212">
    <property type="term" value="P:meiotic spindle organization"/>
    <property type="evidence" value="ECO:0000250"/>
    <property type="project" value="UniProtKB"/>
</dbReference>
<dbReference type="GO" id="GO:0007080">
    <property type="term" value="P:mitotic metaphase chromosome alignment"/>
    <property type="evidence" value="ECO:0000250"/>
    <property type="project" value="UniProtKB"/>
</dbReference>